<evidence type="ECO:0000255" key="1">
    <source>
        <dbReference type="HAMAP-Rule" id="MF_00380"/>
    </source>
</evidence>
<evidence type="ECO:0000256" key="2">
    <source>
        <dbReference type="SAM" id="MobiDB-lite"/>
    </source>
</evidence>
<feature type="chain" id="PRO_0000277747" description="Integration host factor subunit alpha">
    <location>
        <begin position="1"/>
        <end position="100"/>
    </location>
</feature>
<feature type="region of interest" description="Disordered" evidence="2">
    <location>
        <begin position="53"/>
        <end position="72"/>
    </location>
</feature>
<name>IHFA_NEIG1</name>
<keyword id="KW-0233">DNA recombination</keyword>
<keyword id="KW-0238">DNA-binding</keyword>
<keyword id="KW-1185">Reference proteome</keyword>
<keyword id="KW-0804">Transcription</keyword>
<keyword id="KW-0805">Transcription regulation</keyword>
<keyword id="KW-0810">Translation regulation</keyword>
<organism>
    <name type="scientific">Neisseria gonorrhoeae (strain ATCC 700825 / FA 1090)</name>
    <dbReference type="NCBI Taxonomy" id="242231"/>
    <lineage>
        <taxon>Bacteria</taxon>
        <taxon>Pseudomonadati</taxon>
        <taxon>Pseudomonadota</taxon>
        <taxon>Betaproteobacteria</taxon>
        <taxon>Neisseriales</taxon>
        <taxon>Neisseriaceae</taxon>
        <taxon>Neisseria</taxon>
    </lineage>
</organism>
<sequence>MTLTKAELADILVDKVSNVTKNDAKEIVELFFEEIRSTLASGEEIKISGFGNFQLRDKPQRPGRNPKTGEEVPITARRVVTFHASQKLKGMVEHYYDKQR</sequence>
<proteinExistence type="inferred from homology"/>
<comment type="function">
    <text evidence="1">This protein is one of the two subunits of integration host factor, a specific DNA-binding protein that functions in genetic recombination as well as in transcriptional and translational control.</text>
</comment>
<comment type="subunit">
    <text evidence="1">Heterodimer of an alpha and a beta chain.</text>
</comment>
<comment type="similarity">
    <text evidence="1">Belongs to the bacterial histone-like protein family.</text>
</comment>
<reference key="1">
    <citation type="submission" date="2003-03" db="EMBL/GenBank/DDBJ databases">
        <title>The complete genome sequence of Neisseria gonorrhoeae.</title>
        <authorList>
            <person name="Lewis L.A."/>
            <person name="Gillaspy A.F."/>
            <person name="McLaughlin R.E."/>
            <person name="Gipson M."/>
            <person name="Ducey T.F."/>
            <person name="Ownbey T."/>
            <person name="Hartman K."/>
            <person name="Nydick C."/>
            <person name="Carson M.B."/>
            <person name="Vaughn J."/>
            <person name="Thomson C."/>
            <person name="Song L."/>
            <person name="Lin S."/>
            <person name="Yuan X."/>
            <person name="Najar F."/>
            <person name="Zhan M."/>
            <person name="Ren Q."/>
            <person name="Zhu H."/>
            <person name="Qi S."/>
            <person name="Kenton S.M."/>
            <person name="Lai H."/>
            <person name="White J.D."/>
            <person name="Clifton S."/>
            <person name="Roe B.A."/>
            <person name="Dyer D.W."/>
        </authorList>
    </citation>
    <scope>NUCLEOTIDE SEQUENCE [LARGE SCALE GENOMIC DNA]</scope>
    <source>
        <strain>ATCC 700825 / FA 1090</strain>
    </source>
</reference>
<dbReference type="EMBL" id="AE004969">
    <property type="protein sequence ID" value="AAW89052.1"/>
    <property type="molecule type" value="Genomic_DNA"/>
</dbReference>
<dbReference type="RefSeq" id="WP_003687686.1">
    <property type="nucleotide sequence ID" value="NC_002946.2"/>
</dbReference>
<dbReference type="RefSeq" id="YP_207464.1">
    <property type="nucleotide sequence ID" value="NC_002946.2"/>
</dbReference>
<dbReference type="SMR" id="Q5F9T5"/>
<dbReference type="STRING" id="242231.NGO_0305"/>
<dbReference type="KEGG" id="ngo:NGO_0305"/>
<dbReference type="PATRIC" id="fig|242231.10.peg.375"/>
<dbReference type="HOGENOM" id="CLU_105066_1_3_4"/>
<dbReference type="Proteomes" id="UP000000535">
    <property type="component" value="Chromosome"/>
</dbReference>
<dbReference type="GO" id="GO:0005829">
    <property type="term" value="C:cytosol"/>
    <property type="evidence" value="ECO:0007669"/>
    <property type="project" value="TreeGrafter"/>
</dbReference>
<dbReference type="GO" id="GO:0003677">
    <property type="term" value="F:DNA binding"/>
    <property type="evidence" value="ECO:0007669"/>
    <property type="project" value="UniProtKB-UniRule"/>
</dbReference>
<dbReference type="GO" id="GO:0030527">
    <property type="term" value="F:structural constituent of chromatin"/>
    <property type="evidence" value="ECO:0007669"/>
    <property type="project" value="InterPro"/>
</dbReference>
<dbReference type="GO" id="GO:0006310">
    <property type="term" value="P:DNA recombination"/>
    <property type="evidence" value="ECO:0007669"/>
    <property type="project" value="UniProtKB-UniRule"/>
</dbReference>
<dbReference type="GO" id="GO:0009893">
    <property type="term" value="P:positive regulation of metabolic process"/>
    <property type="evidence" value="ECO:0007669"/>
    <property type="project" value="UniProtKB-ARBA"/>
</dbReference>
<dbReference type="GO" id="GO:0006355">
    <property type="term" value="P:regulation of DNA-templated transcription"/>
    <property type="evidence" value="ECO:0007669"/>
    <property type="project" value="UniProtKB-UniRule"/>
</dbReference>
<dbReference type="GO" id="GO:0006417">
    <property type="term" value="P:regulation of translation"/>
    <property type="evidence" value="ECO:0007669"/>
    <property type="project" value="UniProtKB-UniRule"/>
</dbReference>
<dbReference type="CDD" id="cd13835">
    <property type="entry name" value="IHF_A"/>
    <property type="match status" value="1"/>
</dbReference>
<dbReference type="FunFam" id="4.10.520.10:FF:000002">
    <property type="entry name" value="Integration host factor subunit alpha"/>
    <property type="match status" value="1"/>
</dbReference>
<dbReference type="Gene3D" id="4.10.520.10">
    <property type="entry name" value="IHF-like DNA-binding proteins"/>
    <property type="match status" value="1"/>
</dbReference>
<dbReference type="HAMAP" id="MF_00380">
    <property type="entry name" value="IHF_alpha"/>
    <property type="match status" value="1"/>
</dbReference>
<dbReference type="InterPro" id="IPR000119">
    <property type="entry name" value="Hist_DNA-bd"/>
</dbReference>
<dbReference type="InterPro" id="IPR020816">
    <property type="entry name" value="Histone-like_DNA-bd_CS"/>
</dbReference>
<dbReference type="InterPro" id="IPR010992">
    <property type="entry name" value="IHF-like_DNA-bd_dom_sf"/>
</dbReference>
<dbReference type="InterPro" id="IPR005684">
    <property type="entry name" value="IHF_alpha"/>
</dbReference>
<dbReference type="NCBIfam" id="TIGR00987">
    <property type="entry name" value="himA"/>
    <property type="match status" value="1"/>
</dbReference>
<dbReference type="NCBIfam" id="NF001401">
    <property type="entry name" value="PRK00285.1"/>
    <property type="match status" value="1"/>
</dbReference>
<dbReference type="PANTHER" id="PTHR33175">
    <property type="entry name" value="DNA-BINDING PROTEIN HU"/>
    <property type="match status" value="1"/>
</dbReference>
<dbReference type="PANTHER" id="PTHR33175:SF2">
    <property type="entry name" value="INTEGRATION HOST FACTOR SUBUNIT ALPHA"/>
    <property type="match status" value="1"/>
</dbReference>
<dbReference type="Pfam" id="PF00216">
    <property type="entry name" value="Bac_DNA_binding"/>
    <property type="match status" value="1"/>
</dbReference>
<dbReference type="PRINTS" id="PR01727">
    <property type="entry name" value="DNABINDINGHU"/>
</dbReference>
<dbReference type="SMART" id="SM00411">
    <property type="entry name" value="BHL"/>
    <property type="match status" value="1"/>
</dbReference>
<dbReference type="SUPFAM" id="SSF47729">
    <property type="entry name" value="IHF-like DNA-binding proteins"/>
    <property type="match status" value="1"/>
</dbReference>
<dbReference type="PROSITE" id="PS00045">
    <property type="entry name" value="HISTONE_LIKE"/>
    <property type="match status" value="1"/>
</dbReference>
<gene>
    <name evidence="1" type="primary">ihfA</name>
    <name evidence="1" type="synonym">himA</name>
    <name type="ordered locus">NGO_0305</name>
</gene>
<protein>
    <recommendedName>
        <fullName evidence="1">Integration host factor subunit alpha</fullName>
        <shortName evidence="1">IHF-alpha</shortName>
    </recommendedName>
</protein>
<accession>Q5F9T5</accession>